<sequence length="277" mass="29775">MAKPTSRNDRFALFFITLIFLILTVSKPVASQNCGCASDFCCSKYGYCGTTDEFCGEGCQAGPCRSSGGGGDPAVSLEGTVTPDFFNSILNQRGDCPGKGFYTHDTFMAAANSYPSFGASISKREIAAFFAHVAQETGFMCYIEEIDGPAKAASGEYCDTEKPEFPCAQGKGYYGRGAIQLSWNYNYGLCGKALDENLLASPEKVAQDQVLAFKTAFWFWTTNVRTSFKSGFGATIRAVNSRECSGGDSTAKAANRIKYFQDYCGKLGVAPGDNLTC</sequence>
<accession>O24603</accession>
<protein>
    <recommendedName>
        <fullName evidence="9">Endochitinase CHI</fullName>
        <ecNumber>3.2.1.14</ecNumber>
    </recommendedName>
</protein>
<gene>
    <name evidence="11" type="primary">CHI</name>
    <name evidence="8" type="synonym">LSC222</name>
    <name evidence="10" type="ordered locus">At2g43570</name>
    <name evidence="11" type="ORF">F18O19.32</name>
</gene>
<comment type="catalytic activity">
    <reaction evidence="1">
        <text>Random endo-hydrolysis of N-acetyl-beta-D-glucosaminide (1-&gt;4)-beta-linkages in chitin and chitodextrins.</text>
        <dbReference type="EC" id="3.2.1.14"/>
    </reaction>
</comment>
<comment type="induction">
    <text evidence="5 6 7">Accumulates during senescence and in response to 3-amino-1,2,4-triazole (3-AT) and silver nitrate (PubMed:12947053). Induced by viral infection (e.g. cucumber mosaic cucumovirus, oil seed rape tobamovirus, turnip vein clearing tobamovirus, potato virus X potexvirus, and turnip mosaic potyvirus) (PubMed:12535341). Induced by pathogens (PubMed:12920300).</text>
</comment>
<comment type="similarity">
    <text evidence="9">Belongs to the glycosyl hydrolase 19 family. Chitinase class I subfamily.</text>
</comment>
<reference key="1">
    <citation type="journal article" date="1999" name="Nature">
        <title>Sequence and analysis of chromosome 2 of the plant Arabidopsis thaliana.</title>
        <authorList>
            <person name="Lin X."/>
            <person name="Kaul S."/>
            <person name="Rounsley S.D."/>
            <person name="Shea T.P."/>
            <person name="Benito M.-I."/>
            <person name="Town C.D."/>
            <person name="Fujii C.Y."/>
            <person name="Mason T.M."/>
            <person name="Bowman C.L."/>
            <person name="Barnstead M.E."/>
            <person name="Feldblyum T.V."/>
            <person name="Buell C.R."/>
            <person name="Ketchum K.A."/>
            <person name="Lee J.J."/>
            <person name="Ronning C.M."/>
            <person name="Koo H.L."/>
            <person name="Moffat K.S."/>
            <person name="Cronin L.A."/>
            <person name="Shen M."/>
            <person name="Pai G."/>
            <person name="Van Aken S."/>
            <person name="Umayam L."/>
            <person name="Tallon L.J."/>
            <person name="Gill J.E."/>
            <person name="Adams M.D."/>
            <person name="Carrera A.J."/>
            <person name="Creasy T.H."/>
            <person name="Goodman H.M."/>
            <person name="Somerville C.R."/>
            <person name="Copenhaver G.P."/>
            <person name="Preuss D."/>
            <person name="Nierman W.C."/>
            <person name="White O."/>
            <person name="Eisen J.A."/>
            <person name="Salzberg S.L."/>
            <person name="Fraser C.M."/>
            <person name="Venter J.C."/>
        </authorList>
    </citation>
    <scope>NUCLEOTIDE SEQUENCE [LARGE SCALE GENOMIC DNA]</scope>
    <source>
        <strain>cv. Columbia</strain>
    </source>
</reference>
<reference key="2">
    <citation type="journal article" date="2017" name="Plant J.">
        <title>Araport11: a complete reannotation of the Arabidopsis thaliana reference genome.</title>
        <authorList>
            <person name="Cheng C.Y."/>
            <person name="Krishnakumar V."/>
            <person name="Chan A.P."/>
            <person name="Thibaud-Nissen F."/>
            <person name="Schobel S."/>
            <person name="Town C.D."/>
        </authorList>
    </citation>
    <scope>GENOME REANNOTATION</scope>
    <source>
        <strain>cv. Columbia</strain>
    </source>
</reference>
<reference key="3">
    <citation type="journal article" date="2003" name="Science">
        <title>Empirical analysis of transcriptional activity in the Arabidopsis genome.</title>
        <authorList>
            <person name="Yamada K."/>
            <person name="Lim J."/>
            <person name="Dale J.M."/>
            <person name="Chen H."/>
            <person name="Shinn P."/>
            <person name="Palm C.J."/>
            <person name="Southwick A.M."/>
            <person name="Wu H.C."/>
            <person name="Kim C.J."/>
            <person name="Nguyen M."/>
            <person name="Pham P.K."/>
            <person name="Cheuk R.F."/>
            <person name="Karlin-Newmann G."/>
            <person name="Liu S.X."/>
            <person name="Lam B."/>
            <person name="Sakano H."/>
            <person name="Wu T."/>
            <person name="Yu G."/>
            <person name="Miranda M."/>
            <person name="Quach H.L."/>
            <person name="Tripp M."/>
            <person name="Chang C.H."/>
            <person name="Lee J.M."/>
            <person name="Toriumi M.J."/>
            <person name="Chan M.M."/>
            <person name="Tang C.C."/>
            <person name="Onodera C.S."/>
            <person name="Deng J.M."/>
            <person name="Akiyama K."/>
            <person name="Ansari Y."/>
            <person name="Arakawa T."/>
            <person name="Banh J."/>
            <person name="Banno F."/>
            <person name="Bowser L."/>
            <person name="Brooks S.Y."/>
            <person name="Carninci P."/>
            <person name="Chao Q."/>
            <person name="Choy N."/>
            <person name="Enju A."/>
            <person name="Goldsmith A.D."/>
            <person name="Gurjal M."/>
            <person name="Hansen N.F."/>
            <person name="Hayashizaki Y."/>
            <person name="Johnson-Hopson C."/>
            <person name="Hsuan V.W."/>
            <person name="Iida K."/>
            <person name="Karnes M."/>
            <person name="Khan S."/>
            <person name="Koesema E."/>
            <person name="Ishida J."/>
            <person name="Jiang P.X."/>
            <person name="Jones T."/>
            <person name="Kawai J."/>
            <person name="Kamiya A."/>
            <person name="Meyers C."/>
            <person name="Nakajima M."/>
            <person name="Narusaka M."/>
            <person name="Seki M."/>
            <person name="Sakurai T."/>
            <person name="Satou M."/>
            <person name="Tamse R."/>
            <person name="Vaysberg M."/>
            <person name="Wallender E.K."/>
            <person name="Wong C."/>
            <person name="Yamamura Y."/>
            <person name="Yuan S."/>
            <person name="Shinozaki K."/>
            <person name="Davis R.W."/>
            <person name="Theologis A."/>
            <person name="Ecker J.R."/>
        </authorList>
    </citation>
    <scope>NUCLEOTIDE SEQUENCE [LARGE SCALE MRNA]</scope>
    <source>
        <strain>cv. Columbia</strain>
    </source>
</reference>
<reference key="4">
    <citation type="submission" date="2006-07" db="EMBL/GenBank/DDBJ databases">
        <title>Large-scale analysis of RIKEN Arabidopsis full-length (RAFL) cDNAs.</title>
        <authorList>
            <person name="Totoki Y."/>
            <person name="Seki M."/>
            <person name="Ishida J."/>
            <person name="Nakajima M."/>
            <person name="Enju A."/>
            <person name="Kamiya A."/>
            <person name="Narusaka M."/>
            <person name="Shin-i T."/>
            <person name="Nakagawa M."/>
            <person name="Sakamoto N."/>
            <person name="Oishi K."/>
            <person name="Kohara Y."/>
            <person name="Kobayashi M."/>
            <person name="Toyoda A."/>
            <person name="Sakaki Y."/>
            <person name="Sakurai T."/>
            <person name="Iida K."/>
            <person name="Akiyama K."/>
            <person name="Satou M."/>
            <person name="Toyoda T."/>
            <person name="Konagaya A."/>
            <person name="Carninci P."/>
            <person name="Kawai J."/>
            <person name="Hayashizaki Y."/>
            <person name="Shinozaki K."/>
        </authorList>
    </citation>
    <scope>NUCLEOTIDE SEQUENCE [LARGE SCALE MRNA]</scope>
    <source>
        <strain>cv. Columbia</strain>
    </source>
</reference>
<reference key="5">
    <citation type="journal article" date="2001" name="Planta">
        <title>Expression pattern of the Arabidopsis thaliana AtEP3/AtchitIV endochitinase gene.</title>
        <authorList>
            <person name="Passarinho P.A."/>
            <person name="Van Hengel A.J."/>
            <person name="Fransz P.F."/>
            <person name="de Vries S.C."/>
        </authorList>
    </citation>
    <scope>GENE FAMILY</scope>
</reference>
<reference key="6">
    <citation type="journal article" date="2003" name="J. Exp. Bot.">
        <title>Expression of senescence-enhanced genes in response to oxidative stress.</title>
        <authorList>
            <person name="Navabpour S."/>
            <person name="Morris K."/>
            <person name="Allen R."/>
            <person name="Harrison E."/>
            <person name="A-H-Mackerness S."/>
            <person name="Buchanan-Wollaston V."/>
        </authorList>
    </citation>
    <scope>INDUCTION BY SENESCENCE</scope>
    <source>
        <strain>cv. Columbia</strain>
    </source>
</reference>
<reference key="7">
    <citation type="journal article" date="2003" name="Plant J.">
        <title>Diverse RNA viruses elicit the expression of common sets of genes in susceptible Arabidopsis thaliana plants.</title>
        <authorList>
            <person name="Whitham S.A."/>
            <person name="Quan S."/>
            <person name="Chang H.S."/>
            <person name="Cooper B."/>
            <person name="Estes B."/>
            <person name="Zhu T."/>
            <person name="Wang X."/>
            <person name="Hou Y.M."/>
        </authorList>
    </citation>
    <scope>INDUCTION BY VIRUS</scope>
    <source>
        <strain>cv. Columbia</strain>
    </source>
</reference>
<reference key="8">
    <citation type="journal article" date="2003" name="Science">
        <title>Loss of a callose synthase results in salicylic acid-dependent disease resistance.</title>
        <authorList>
            <person name="Nishimura M.T."/>
            <person name="Stein M."/>
            <person name="Hou B.-H."/>
            <person name="Vogel J.P."/>
            <person name="Edwards H."/>
            <person name="Somerville S.C."/>
        </authorList>
    </citation>
    <scope>INDUCTION BY PATHOGENS</scope>
    <source>
        <strain>cv. Columbia</strain>
    </source>
</reference>
<dbReference type="EC" id="3.2.1.14"/>
<dbReference type="EMBL" id="AC002333">
    <property type="protein sequence ID" value="AAB64049.1"/>
    <property type="molecule type" value="Genomic_DNA"/>
</dbReference>
<dbReference type="EMBL" id="AC002335">
    <property type="protein sequence ID" value="AAM14808.1"/>
    <property type="molecule type" value="Genomic_DNA"/>
</dbReference>
<dbReference type="EMBL" id="CP002685">
    <property type="protein sequence ID" value="AEC10291.1"/>
    <property type="molecule type" value="Genomic_DNA"/>
</dbReference>
<dbReference type="EMBL" id="AY099810">
    <property type="protein sequence ID" value="AAM20661.1"/>
    <property type="molecule type" value="mRNA"/>
</dbReference>
<dbReference type="EMBL" id="BT003417">
    <property type="protein sequence ID" value="AAO30080.1"/>
    <property type="molecule type" value="mRNA"/>
</dbReference>
<dbReference type="EMBL" id="AK226201">
    <property type="protein sequence ID" value="BAE98366.1"/>
    <property type="molecule type" value="mRNA"/>
</dbReference>
<dbReference type="PIR" id="G84867">
    <property type="entry name" value="G84867"/>
</dbReference>
<dbReference type="RefSeq" id="NP_181885.1">
    <property type="nucleotide sequence ID" value="NM_129919.5"/>
</dbReference>
<dbReference type="SMR" id="O24603"/>
<dbReference type="FunCoup" id="O24603">
    <property type="interactions" value="136"/>
</dbReference>
<dbReference type="STRING" id="3702.O24603"/>
<dbReference type="CAZy" id="CBM18">
    <property type="family name" value="Carbohydrate-Binding Module Family 18"/>
</dbReference>
<dbReference type="CAZy" id="GH19">
    <property type="family name" value="Glycoside Hydrolase Family 19"/>
</dbReference>
<dbReference type="GlyCosmos" id="O24603">
    <property type="glycosylation" value="1 site, No reported glycans"/>
</dbReference>
<dbReference type="GlyGen" id="O24603">
    <property type="glycosylation" value="1 site"/>
</dbReference>
<dbReference type="PaxDb" id="3702-AT2G43570.1"/>
<dbReference type="ProteomicsDB" id="246879"/>
<dbReference type="EnsemblPlants" id="AT2G43570.1">
    <property type="protein sequence ID" value="AT2G43570.1"/>
    <property type="gene ID" value="AT2G43570"/>
</dbReference>
<dbReference type="GeneID" id="818959"/>
<dbReference type="Gramene" id="AT2G43570.1">
    <property type="protein sequence ID" value="AT2G43570.1"/>
    <property type="gene ID" value="AT2G43570"/>
</dbReference>
<dbReference type="KEGG" id="ath:AT2G43570"/>
<dbReference type="Araport" id="AT2G43570"/>
<dbReference type="TAIR" id="AT2G43570">
    <property type="gene designation" value="CHI"/>
</dbReference>
<dbReference type="eggNOG" id="KOG4742">
    <property type="taxonomic scope" value="Eukaryota"/>
</dbReference>
<dbReference type="HOGENOM" id="CLU_045506_1_1_1"/>
<dbReference type="InParanoid" id="O24603"/>
<dbReference type="OMA" id="ANRIRYF"/>
<dbReference type="PhylomeDB" id="O24603"/>
<dbReference type="BioCyc" id="ARA:AT2G43570-MONOMER"/>
<dbReference type="PRO" id="PR:O24603"/>
<dbReference type="Proteomes" id="UP000006548">
    <property type="component" value="Chromosome 2"/>
</dbReference>
<dbReference type="ExpressionAtlas" id="O24603">
    <property type="expression patterns" value="baseline and differential"/>
</dbReference>
<dbReference type="GO" id="GO:0048046">
    <property type="term" value="C:apoplast"/>
    <property type="evidence" value="ECO:0007005"/>
    <property type="project" value="TAIR"/>
</dbReference>
<dbReference type="GO" id="GO:0099503">
    <property type="term" value="C:secretory vesicle"/>
    <property type="evidence" value="ECO:0007005"/>
    <property type="project" value="TAIR"/>
</dbReference>
<dbReference type="GO" id="GO:0008061">
    <property type="term" value="F:chitin binding"/>
    <property type="evidence" value="ECO:0007669"/>
    <property type="project" value="UniProtKB-KW"/>
</dbReference>
<dbReference type="GO" id="GO:0008843">
    <property type="term" value="F:endochitinase activity"/>
    <property type="evidence" value="ECO:0007669"/>
    <property type="project" value="UniProtKB-EC"/>
</dbReference>
<dbReference type="GO" id="GO:0016998">
    <property type="term" value="P:cell wall macromolecule catabolic process"/>
    <property type="evidence" value="ECO:0007669"/>
    <property type="project" value="InterPro"/>
</dbReference>
<dbReference type="GO" id="GO:0006032">
    <property type="term" value="P:chitin catabolic process"/>
    <property type="evidence" value="ECO:0007669"/>
    <property type="project" value="UniProtKB-KW"/>
</dbReference>
<dbReference type="GO" id="GO:0010150">
    <property type="term" value="P:leaf senescence"/>
    <property type="evidence" value="ECO:0000270"/>
    <property type="project" value="UniProtKB"/>
</dbReference>
<dbReference type="GO" id="GO:0000272">
    <property type="term" value="P:polysaccharide catabolic process"/>
    <property type="evidence" value="ECO:0007669"/>
    <property type="project" value="UniProtKB-KW"/>
</dbReference>
<dbReference type="GO" id="GO:0072722">
    <property type="term" value="P:response to amitrole"/>
    <property type="evidence" value="ECO:0000270"/>
    <property type="project" value="UniProtKB"/>
</dbReference>
<dbReference type="GO" id="GO:0010272">
    <property type="term" value="P:response to silver ion"/>
    <property type="evidence" value="ECO:0000270"/>
    <property type="project" value="UniProtKB"/>
</dbReference>
<dbReference type="GO" id="GO:0009615">
    <property type="term" value="P:response to virus"/>
    <property type="evidence" value="ECO:0000270"/>
    <property type="project" value="UniProtKB"/>
</dbReference>
<dbReference type="GO" id="GO:0009627">
    <property type="term" value="P:systemic acquired resistance"/>
    <property type="evidence" value="ECO:0000270"/>
    <property type="project" value="TAIR"/>
</dbReference>
<dbReference type="CDD" id="cd00325">
    <property type="entry name" value="chitinase_GH19"/>
    <property type="match status" value="1"/>
</dbReference>
<dbReference type="CDD" id="cd00035">
    <property type="entry name" value="ChtBD1"/>
    <property type="match status" value="1"/>
</dbReference>
<dbReference type="FunFam" id="3.30.60.10:FF:000002">
    <property type="entry name" value="Chitinase B"/>
    <property type="match status" value="1"/>
</dbReference>
<dbReference type="FunFam" id="3.30.20.10:FF:000001">
    <property type="entry name" value="Endochitinase (Chitinase)"/>
    <property type="match status" value="1"/>
</dbReference>
<dbReference type="Gene3D" id="1.10.530.10">
    <property type="match status" value="1"/>
</dbReference>
<dbReference type="Gene3D" id="3.30.20.10">
    <property type="entry name" value="Endochitinase, domain 2"/>
    <property type="match status" value="1"/>
</dbReference>
<dbReference type="Gene3D" id="3.30.60.10">
    <property type="entry name" value="Endochitinase-like"/>
    <property type="match status" value="1"/>
</dbReference>
<dbReference type="InterPro" id="IPR001002">
    <property type="entry name" value="Chitin-bd_1"/>
</dbReference>
<dbReference type="InterPro" id="IPR018371">
    <property type="entry name" value="Chitin-binding_1_CS"/>
</dbReference>
<dbReference type="InterPro" id="IPR036861">
    <property type="entry name" value="Endochitinase-like_sf"/>
</dbReference>
<dbReference type="InterPro" id="IPR016283">
    <property type="entry name" value="Glyco_hydro_19"/>
</dbReference>
<dbReference type="InterPro" id="IPR000726">
    <property type="entry name" value="Glyco_hydro_19_cat"/>
</dbReference>
<dbReference type="InterPro" id="IPR023346">
    <property type="entry name" value="Lysozyme-like_dom_sf"/>
</dbReference>
<dbReference type="PANTHER" id="PTHR22595">
    <property type="entry name" value="CHITINASE-RELATED"/>
    <property type="match status" value="1"/>
</dbReference>
<dbReference type="PANTHER" id="PTHR22595:SF201">
    <property type="entry name" value="ENDOCHITINASE CHI"/>
    <property type="match status" value="1"/>
</dbReference>
<dbReference type="Pfam" id="PF00187">
    <property type="entry name" value="Chitin_bind_1"/>
    <property type="match status" value="1"/>
</dbReference>
<dbReference type="Pfam" id="PF00182">
    <property type="entry name" value="Glyco_hydro_19"/>
    <property type="match status" value="1"/>
</dbReference>
<dbReference type="PIRSF" id="PIRSF001060">
    <property type="entry name" value="Endochitinase"/>
    <property type="match status" value="1"/>
</dbReference>
<dbReference type="SMART" id="SM00270">
    <property type="entry name" value="ChtBD1"/>
    <property type="match status" value="1"/>
</dbReference>
<dbReference type="SUPFAM" id="SSF53955">
    <property type="entry name" value="Lysozyme-like"/>
    <property type="match status" value="1"/>
</dbReference>
<dbReference type="SUPFAM" id="SSF57016">
    <property type="entry name" value="Plant lectins/antimicrobial peptides"/>
    <property type="match status" value="1"/>
</dbReference>
<dbReference type="PROSITE" id="PS00026">
    <property type="entry name" value="CHIT_BIND_I_1"/>
    <property type="match status" value="1"/>
</dbReference>
<dbReference type="PROSITE" id="PS50941">
    <property type="entry name" value="CHIT_BIND_I_2"/>
    <property type="match status" value="1"/>
</dbReference>
<dbReference type="PROSITE" id="PS00773">
    <property type="entry name" value="CHITINASE_19_1"/>
    <property type="match status" value="1"/>
</dbReference>
<evidence type="ECO:0000250" key="1">
    <source>
        <dbReference type="UniProtKB" id="P29022"/>
    </source>
</evidence>
<evidence type="ECO:0000255" key="2"/>
<evidence type="ECO:0000255" key="3">
    <source>
        <dbReference type="PROSITE-ProRule" id="PRU00261"/>
    </source>
</evidence>
<evidence type="ECO:0000255" key="4">
    <source>
        <dbReference type="PROSITE-ProRule" id="PRU00498"/>
    </source>
</evidence>
<evidence type="ECO:0000269" key="5">
    <source>
    </source>
</evidence>
<evidence type="ECO:0000269" key="6">
    <source>
    </source>
</evidence>
<evidence type="ECO:0000269" key="7">
    <source>
    </source>
</evidence>
<evidence type="ECO:0000303" key="8">
    <source>
    </source>
</evidence>
<evidence type="ECO:0000305" key="9"/>
<evidence type="ECO:0000312" key="10">
    <source>
        <dbReference type="EMBL" id="AAM20661.1"/>
    </source>
</evidence>
<evidence type="ECO:0000312" key="11">
    <source>
        <dbReference type="EMBL" id="AEC10291.1"/>
    </source>
</evidence>
<evidence type="ECO:0000312" key="12">
    <source>
        <dbReference type="Proteomes" id="UP000006548"/>
    </source>
</evidence>
<name>CHI_ARATH</name>
<feature type="signal peptide" evidence="2">
    <location>
        <begin position="1"/>
        <end position="31"/>
    </location>
</feature>
<feature type="chain" id="PRO_0000433910" description="Endochitinase CHI" evidence="2">
    <location>
        <begin position="32"/>
        <end position="277"/>
    </location>
</feature>
<feature type="domain" description="Chitin-binding type-1" evidence="3">
    <location>
        <begin position="32"/>
        <end position="66"/>
    </location>
</feature>
<feature type="region of interest" description="Catalytic" evidence="1">
    <location>
        <begin position="75"/>
        <end position="277"/>
    </location>
</feature>
<feature type="active site" description="Proton donor" evidence="1">
    <location>
        <position position="136"/>
    </location>
</feature>
<feature type="glycosylation site" description="N-linked (GlcNAc...) asparagine" evidence="4">
    <location>
        <position position="274"/>
    </location>
</feature>
<feature type="disulfide bond" evidence="3">
    <location>
        <begin position="34"/>
        <end position="42"/>
    </location>
</feature>
<feature type="disulfide bond" evidence="3">
    <location>
        <begin position="36"/>
        <end position="48"/>
    </location>
</feature>
<feature type="disulfide bond" evidence="3">
    <location>
        <begin position="41"/>
        <end position="55"/>
    </location>
</feature>
<feature type="disulfide bond" evidence="3">
    <location>
        <begin position="59"/>
        <end position="64"/>
    </location>
</feature>
<organism evidence="12">
    <name type="scientific">Arabidopsis thaliana</name>
    <name type="common">Mouse-ear cress</name>
    <dbReference type="NCBI Taxonomy" id="3702"/>
    <lineage>
        <taxon>Eukaryota</taxon>
        <taxon>Viridiplantae</taxon>
        <taxon>Streptophyta</taxon>
        <taxon>Embryophyta</taxon>
        <taxon>Tracheophyta</taxon>
        <taxon>Spermatophyta</taxon>
        <taxon>Magnoliopsida</taxon>
        <taxon>eudicotyledons</taxon>
        <taxon>Gunneridae</taxon>
        <taxon>Pentapetalae</taxon>
        <taxon>rosids</taxon>
        <taxon>malvids</taxon>
        <taxon>Brassicales</taxon>
        <taxon>Brassicaceae</taxon>
        <taxon>Camelineae</taxon>
        <taxon>Arabidopsis</taxon>
    </lineage>
</organism>
<keyword id="KW-0119">Carbohydrate metabolism</keyword>
<keyword id="KW-0146">Chitin degradation</keyword>
<keyword id="KW-0147">Chitin-binding</keyword>
<keyword id="KW-1015">Disulfide bond</keyword>
<keyword id="KW-0325">Glycoprotein</keyword>
<keyword id="KW-0326">Glycosidase</keyword>
<keyword id="KW-0378">Hydrolase</keyword>
<keyword id="KW-0611">Plant defense</keyword>
<keyword id="KW-0624">Polysaccharide degradation</keyword>
<keyword id="KW-1185">Reference proteome</keyword>
<keyword id="KW-0732">Signal</keyword>
<proteinExistence type="evidence at transcript level"/>